<reference key="1">
    <citation type="submission" date="2006-03" db="EMBL/GenBank/DDBJ databases">
        <title>Complete sequence of Rhodopseudomonas palustris BisB18.</title>
        <authorList>
            <consortium name="US DOE Joint Genome Institute"/>
            <person name="Copeland A."/>
            <person name="Lucas S."/>
            <person name="Lapidus A."/>
            <person name="Barry K."/>
            <person name="Detter J.C."/>
            <person name="Glavina del Rio T."/>
            <person name="Hammon N."/>
            <person name="Israni S."/>
            <person name="Dalin E."/>
            <person name="Tice H."/>
            <person name="Pitluck S."/>
            <person name="Chain P."/>
            <person name="Malfatti S."/>
            <person name="Shin M."/>
            <person name="Vergez L."/>
            <person name="Schmutz J."/>
            <person name="Larimer F."/>
            <person name="Land M."/>
            <person name="Hauser L."/>
            <person name="Pelletier D.A."/>
            <person name="Kyrpides N."/>
            <person name="Anderson I."/>
            <person name="Oda Y."/>
            <person name="Harwood C.S."/>
            <person name="Richardson P."/>
        </authorList>
    </citation>
    <scope>NUCLEOTIDE SEQUENCE [LARGE SCALE GENOMIC DNA]</scope>
    <source>
        <strain>BisB18</strain>
    </source>
</reference>
<evidence type="ECO:0000255" key="1">
    <source>
        <dbReference type="HAMAP-Rule" id="MF_00487"/>
    </source>
</evidence>
<name>MDH2_RHOPB</name>
<organism>
    <name type="scientific">Rhodopseudomonas palustris (strain BisB18)</name>
    <dbReference type="NCBI Taxonomy" id="316056"/>
    <lineage>
        <taxon>Bacteria</taxon>
        <taxon>Pseudomonadati</taxon>
        <taxon>Pseudomonadota</taxon>
        <taxon>Alphaproteobacteria</taxon>
        <taxon>Hyphomicrobiales</taxon>
        <taxon>Nitrobacteraceae</taxon>
        <taxon>Rhodopseudomonas</taxon>
    </lineage>
</organism>
<gene>
    <name evidence="1" type="primary">mdh2</name>
    <name type="ordered locus">RPC_4584</name>
</gene>
<feature type="chain" id="PRO_0000241963" description="Malate dehydrogenase 2">
    <location>
        <begin position="1"/>
        <end position="320"/>
    </location>
</feature>
<feature type="active site" description="Proton acceptor" evidence="1">
    <location>
        <position position="176"/>
    </location>
</feature>
<feature type="binding site" evidence="1">
    <location>
        <begin position="10"/>
        <end position="15"/>
    </location>
    <ligand>
        <name>NAD(+)</name>
        <dbReference type="ChEBI" id="CHEBI:57540"/>
    </ligand>
</feature>
<feature type="binding site" evidence="1">
    <location>
        <position position="34"/>
    </location>
    <ligand>
        <name>NAD(+)</name>
        <dbReference type="ChEBI" id="CHEBI:57540"/>
    </ligand>
</feature>
<feature type="binding site" evidence="1">
    <location>
        <position position="83"/>
    </location>
    <ligand>
        <name>substrate</name>
    </ligand>
</feature>
<feature type="binding site" evidence="1">
    <location>
        <position position="89"/>
    </location>
    <ligand>
        <name>substrate</name>
    </ligand>
</feature>
<feature type="binding site" evidence="1">
    <location>
        <position position="96"/>
    </location>
    <ligand>
        <name>NAD(+)</name>
        <dbReference type="ChEBI" id="CHEBI:57540"/>
    </ligand>
</feature>
<feature type="binding site" evidence="1">
    <location>
        <begin position="119"/>
        <end position="121"/>
    </location>
    <ligand>
        <name>NAD(+)</name>
        <dbReference type="ChEBI" id="CHEBI:57540"/>
    </ligand>
</feature>
<feature type="binding site" evidence="1">
    <location>
        <position position="121"/>
    </location>
    <ligand>
        <name>substrate</name>
    </ligand>
</feature>
<feature type="binding site" evidence="1">
    <location>
        <position position="152"/>
    </location>
    <ligand>
        <name>substrate</name>
    </ligand>
</feature>
<protein>
    <recommendedName>
        <fullName evidence="1">Malate dehydrogenase 2</fullName>
        <ecNumber evidence="1">1.1.1.37</ecNumber>
    </recommendedName>
</protein>
<sequence>MSRKKIVLAGAGQIGGTLAHLAMLHRLGDVTLLDVNANPPKGKALDLSHAAAVEGCDAVLTGTADQADIAGADVVIVTAGVPRRPGVDRDALLAINLPVMESIGTAIGRYCPDAFVICITNPLDAMVWALRRFSGLPPARVVGMGGVLDSARLRSFLAEALGVSVTEVQAMTLGGHGDDMVPLVRQATVGGVPLPALVKMGWITQQAIDDIVQRTRTGGAEVVNLLWTSSAYYAPASAAIAMATSYLGDQKRVFAASAALSGQYGVDGLHVGVPVMIGAGGIEKIIELEFDDEEQRQFTRSVAAVAALVEDCKRLHRGLA</sequence>
<dbReference type="EC" id="1.1.1.37" evidence="1"/>
<dbReference type="EMBL" id="CP000301">
    <property type="protein sequence ID" value="ABD90106.1"/>
    <property type="molecule type" value="Genomic_DNA"/>
</dbReference>
<dbReference type="SMR" id="Q20XN0"/>
<dbReference type="STRING" id="316056.RPC_4584"/>
<dbReference type="KEGG" id="rpc:RPC_4584"/>
<dbReference type="eggNOG" id="COG0039">
    <property type="taxonomic scope" value="Bacteria"/>
</dbReference>
<dbReference type="HOGENOM" id="CLU_045401_2_1_5"/>
<dbReference type="OrthoDB" id="9802969at2"/>
<dbReference type="GO" id="GO:0004459">
    <property type="term" value="F:L-lactate dehydrogenase activity"/>
    <property type="evidence" value="ECO:0007669"/>
    <property type="project" value="TreeGrafter"/>
</dbReference>
<dbReference type="GO" id="GO:0030060">
    <property type="term" value="F:L-malate dehydrogenase (NAD+) activity"/>
    <property type="evidence" value="ECO:0007669"/>
    <property type="project" value="UniProtKB-UniRule"/>
</dbReference>
<dbReference type="GO" id="GO:0006089">
    <property type="term" value="P:lactate metabolic process"/>
    <property type="evidence" value="ECO:0007669"/>
    <property type="project" value="TreeGrafter"/>
</dbReference>
<dbReference type="GO" id="GO:0006099">
    <property type="term" value="P:tricarboxylic acid cycle"/>
    <property type="evidence" value="ECO:0007669"/>
    <property type="project" value="UniProtKB-UniRule"/>
</dbReference>
<dbReference type="CDD" id="cd01339">
    <property type="entry name" value="LDH-like_MDH"/>
    <property type="match status" value="1"/>
</dbReference>
<dbReference type="FunFam" id="3.40.50.720:FF:000018">
    <property type="entry name" value="Malate dehydrogenase"/>
    <property type="match status" value="1"/>
</dbReference>
<dbReference type="FunFam" id="3.90.110.10:FF:000004">
    <property type="entry name" value="Malate dehydrogenase"/>
    <property type="match status" value="1"/>
</dbReference>
<dbReference type="Gene3D" id="3.90.110.10">
    <property type="entry name" value="Lactate dehydrogenase/glycoside hydrolase, family 4, C-terminal"/>
    <property type="match status" value="1"/>
</dbReference>
<dbReference type="Gene3D" id="3.40.50.720">
    <property type="entry name" value="NAD(P)-binding Rossmann-like Domain"/>
    <property type="match status" value="1"/>
</dbReference>
<dbReference type="HAMAP" id="MF_00487">
    <property type="entry name" value="Malate_dehydrog_3"/>
    <property type="match status" value="1"/>
</dbReference>
<dbReference type="InterPro" id="IPR001557">
    <property type="entry name" value="L-lactate/malate_DH"/>
</dbReference>
<dbReference type="InterPro" id="IPR022383">
    <property type="entry name" value="Lactate/malate_DH_C"/>
</dbReference>
<dbReference type="InterPro" id="IPR001236">
    <property type="entry name" value="Lactate/malate_DH_N"/>
</dbReference>
<dbReference type="InterPro" id="IPR015955">
    <property type="entry name" value="Lactate_DH/Glyco_Ohase_4_C"/>
</dbReference>
<dbReference type="InterPro" id="IPR011275">
    <property type="entry name" value="Malate_DH_type3"/>
</dbReference>
<dbReference type="InterPro" id="IPR036291">
    <property type="entry name" value="NAD(P)-bd_dom_sf"/>
</dbReference>
<dbReference type="NCBIfam" id="TIGR01763">
    <property type="entry name" value="MalateDH_bact"/>
    <property type="match status" value="1"/>
</dbReference>
<dbReference type="NCBIfam" id="NF004863">
    <property type="entry name" value="PRK06223.1"/>
    <property type="match status" value="1"/>
</dbReference>
<dbReference type="PANTHER" id="PTHR43128">
    <property type="entry name" value="L-2-HYDROXYCARBOXYLATE DEHYDROGENASE (NAD(P)(+))"/>
    <property type="match status" value="1"/>
</dbReference>
<dbReference type="PANTHER" id="PTHR43128:SF16">
    <property type="entry name" value="L-LACTATE DEHYDROGENASE"/>
    <property type="match status" value="1"/>
</dbReference>
<dbReference type="Pfam" id="PF02866">
    <property type="entry name" value="Ldh_1_C"/>
    <property type="match status" value="1"/>
</dbReference>
<dbReference type="Pfam" id="PF00056">
    <property type="entry name" value="Ldh_1_N"/>
    <property type="match status" value="1"/>
</dbReference>
<dbReference type="PIRSF" id="PIRSF000102">
    <property type="entry name" value="Lac_mal_DH"/>
    <property type="match status" value="1"/>
</dbReference>
<dbReference type="PRINTS" id="PR00086">
    <property type="entry name" value="LLDHDRGNASE"/>
</dbReference>
<dbReference type="SUPFAM" id="SSF56327">
    <property type="entry name" value="LDH C-terminal domain-like"/>
    <property type="match status" value="1"/>
</dbReference>
<dbReference type="SUPFAM" id="SSF51735">
    <property type="entry name" value="NAD(P)-binding Rossmann-fold domains"/>
    <property type="match status" value="1"/>
</dbReference>
<proteinExistence type="inferred from homology"/>
<accession>Q20XN0</accession>
<comment type="function">
    <text evidence="1">Catalyzes the reversible oxidation of malate to oxaloacetate.</text>
</comment>
<comment type="catalytic activity">
    <reaction evidence="1">
        <text>(S)-malate + NAD(+) = oxaloacetate + NADH + H(+)</text>
        <dbReference type="Rhea" id="RHEA:21432"/>
        <dbReference type="ChEBI" id="CHEBI:15378"/>
        <dbReference type="ChEBI" id="CHEBI:15589"/>
        <dbReference type="ChEBI" id="CHEBI:16452"/>
        <dbReference type="ChEBI" id="CHEBI:57540"/>
        <dbReference type="ChEBI" id="CHEBI:57945"/>
        <dbReference type="EC" id="1.1.1.37"/>
    </reaction>
</comment>
<comment type="similarity">
    <text evidence="1">Belongs to the LDH/MDH superfamily. MDH type 3 family.</text>
</comment>
<keyword id="KW-0520">NAD</keyword>
<keyword id="KW-0560">Oxidoreductase</keyword>
<keyword id="KW-0816">Tricarboxylic acid cycle</keyword>